<proteinExistence type="evidence at protein level"/>
<feature type="signal peptide" evidence="6 10">
    <location>
        <begin position="1"/>
        <end position="24"/>
    </location>
</feature>
<feature type="chain" id="PRO_0000023425" description="Snake venom vascular endothelial growth factor toxin">
    <location>
        <begin position="25"/>
        <end position="146"/>
    </location>
</feature>
<feature type="region of interest" description="Disordered" evidence="7">
    <location>
        <begin position="118"/>
        <end position="146"/>
    </location>
</feature>
<feature type="compositionally biased region" description="Basic and acidic residues" evidence="7">
    <location>
        <begin position="133"/>
        <end position="146"/>
    </location>
</feature>
<feature type="modified residue" description="Pyrrolidone carboxylic acid" evidence="4">
    <location>
        <position position="25"/>
    </location>
</feature>
<feature type="disulfide bond" evidence="3">
    <location>
        <begin position="38"/>
        <end position="80"/>
    </location>
</feature>
<feature type="disulfide bond" description="Interchain (with C-72)" evidence="3">
    <location>
        <position position="63"/>
    </location>
</feature>
<feature type="disulfide bond" evidence="3">
    <location>
        <begin position="69"/>
        <end position="115"/>
    </location>
</feature>
<feature type="disulfide bond" description="Interchain (with C-63)" evidence="3">
    <location>
        <position position="72"/>
    </location>
</feature>
<feature type="disulfide bond" evidence="3">
    <location>
        <begin position="73"/>
        <end position="117"/>
    </location>
</feature>
<sequence length="146" mass="16377">MAVYLLAVAILFCIQGWPLGTVQGQVMPFMEVYRHSVCQPRETLVSILEEYPGEISHIFRPSCVTALRCGGCCTDESLECTATGKRSVGREIMRLSPHKGTSEKEVMQFTEHTDCECRPRSASGVNSRKHKRNPEEGEPRAKFPFV</sequence>
<comment type="function">
    <text evidence="2 4 5">Snake venom VEGFs that may contribute to venom dispersion and prey subjugation by inducing vascular permeability and hypotension. This protein induces an increase in capillary permeability after intradermal injection, as well as a drastic hypotensive effect after intravenous injection (By similarity). The hypotension is mediated by nitric oxide (NO), which is produced by VEGF-activated endothelium NO synthase. Also induces angiogenesis in vitro (By similarity). Like other crotalid VEGFs, this protein interacts with VEGF receptor-1 (FLT1) with a high affinity, whereas it binds to VEGF receptor-2 (KDR) with a low affinity (By similarity).</text>
</comment>
<comment type="subunit">
    <text evidence="2 8">Homodimer; disulfide-linked (PubMed:11517227). Interacts with VEGF receptor-1 (FLT1) with a high affinity, whereas it binds to VEGF receptor-2 (KDR) with a low affinity. Does not bind VEGF receptor-3 (FLT4) (By similarity).</text>
</comment>
<comment type="subcellular location">
    <subcellularLocation>
        <location evidence="8">Secreted</location>
    </subcellularLocation>
</comment>
<comment type="tissue specificity">
    <text evidence="9">Expressed by the venom gland.</text>
</comment>
<comment type="similarity">
    <text evidence="9">Belongs to the PDGF/VEGF growth factor family. Snake venom VEGF subfamily.</text>
</comment>
<protein>
    <recommendedName>
        <fullName>Snake venom vascular endothelial growth factor toxin</fullName>
        <shortName>svVEGF</shortName>
    </recommendedName>
    <alternativeName>
        <fullName evidence="1">VEGF-F</fullName>
    </alternativeName>
</protein>
<keyword id="KW-1015">Disulfide bond</keyword>
<keyword id="KW-0339">Growth factor</keyword>
<keyword id="KW-0873">Pyrrolidone carboxylic acid</keyword>
<keyword id="KW-0964">Secreted</keyword>
<keyword id="KW-0732">Signal</keyword>
<keyword id="KW-0800">Toxin</keyword>
<accession>Q90X23</accession>
<organism>
    <name type="scientific">Bothrops jararaca</name>
    <name type="common">Jararaca</name>
    <name type="synonym">Bothrops jajaraca</name>
    <dbReference type="NCBI Taxonomy" id="8724"/>
    <lineage>
        <taxon>Eukaryota</taxon>
        <taxon>Metazoa</taxon>
        <taxon>Chordata</taxon>
        <taxon>Craniata</taxon>
        <taxon>Vertebrata</taxon>
        <taxon>Euteleostomi</taxon>
        <taxon>Lepidosauria</taxon>
        <taxon>Squamata</taxon>
        <taxon>Bifurcata</taxon>
        <taxon>Unidentata</taxon>
        <taxon>Episquamata</taxon>
        <taxon>Toxicofera</taxon>
        <taxon>Serpentes</taxon>
        <taxon>Colubroidea</taxon>
        <taxon>Viperidae</taxon>
        <taxon>Crotalinae</taxon>
        <taxon>Bothrops</taxon>
    </lineage>
</organism>
<evidence type="ECO:0000250" key="1">
    <source>
        <dbReference type="UniProtKB" id="P0DL42"/>
    </source>
</evidence>
<evidence type="ECO:0000250" key="2">
    <source>
        <dbReference type="UniProtKB" id="P67862"/>
    </source>
</evidence>
<evidence type="ECO:0000250" key="3">
    <source>
        <dbReference type="UniProtKB" id="P67863"/>
    </source>
</evidence>
<evidence type="ECO:0000250" key="4">
    <source>
        <dbReference type="UniProtKB" id="P83942"/>
    </source>
</evidence>
<evidence type="ECO:0000250" key="5">
    <source>
        <dbReference type="UniProtKB" id="Q330K6"/>
    </source>
</evidence>
<evidence type="ECO:0000255" key="6"/>
<evidence type="ECO:0000256" key="7">
    <source>
        <dbReference type="SAM" id="MobiDB-lite"/>
    </source>
</evidence>
<evidence type="ECO:0000269" key="8">
    <source>
    </source>
</evidence>
<evidence type="ECO:0000305" key="9"/>
<evidence type="ECO:0000312" key="10">
    <source>
        <dbReference type="EMBL" id="AAK52103.1"/>
    </source>
</evidence>
<reference key="1">
    <citation type="journal article" date="2001" name="J. Biol. Chem.">
        <title>Molecular cloning and expression of a functional snake venom vascular endothelium growth factor (VEGF) from the Bothrops insularis pit viper. A new member of the VEGF family of proteins.</title>
        <authorList>
            <person name="Junqueira de Azevedo I.L.M."/>
            <person name="Farsky S.H.P."/>
            <person name="Oliveira M.L.S."/>
            <person name="Ho P.L."/>
        </authorList>
    </citation>
    <scope>NUCLEOTIDE SEQUENCE [MRNA]</scope>
    <scope>SUBUNIT</scope>
    <scope>SUBCELLULAR LOCATION</scope>
    <source>
        <tissue>Venom gland</tissue>
    </source>
</reference>
<dbReference type="EMBL" id="AY033152">
    <property type="protein sequence ID" value="AAK52103.1"/>
    <property type="molecule type" value="mRNA"/>
</dbReference>
<dbReference type="SMR" id="Q90X23"/>
<dbReference type="GO" id="GO:0005615">
    <property type="term" value="C:extracellular space"/>
    <property type="evidence" value="ECO:0007669"/>
    <property type="project" value="TreeGrafter"/>
</dbReference>
<dbReference type="GO" id="GO:0016020">
    <property type="term" value="C:membrane"/>
    <property type="evidence" value="ECO:0007669"/>
    <property type="project" value="InterPro"/>
</dbReference>
<dbReference type="GO" id="GO:0042056">
    <property type="term" value="F:chemoattractant activity"/>
    <property type="evidence" value="ECO:0007669"/>
    <property type="project" value="TreeGrafter"/>
</dbReference>
<dbReference type="GO" id="GO:0008083">
    <property type="term" value="F:growth factor activity"/>
    <property type="evidence" value="ECO:0007669"/>
    <property type="project" value="UniProtKB-KW"/>
</dbReference>
<dbReference type="GO" id="GO:0090729">
    <property type="term" value="F:toxin activity"/>
    <property type="evidence" value="ECO:0007669"/>
    <property type="project" value="UniProtKB-KW"/>
</dbReference>
<dbReference type="GO" id="GO:0005172">
    <property type="term" value="F:vascular endothelial growth factor receptor binding"/>
    <property type="evidence" value="ECO:0007669"/>
    <property type="project" value="TreeGrafter"/>
</dbReference>
<dbReference type="GO" id="GO:0050930">
    <property type="term" value="P:induction of positive chemotaxis"/>
    <property type="evidence" value="ECO:0007669"/>
    <property type="project" value="TreeGrafter"/>
</dbReference>
<dbReference type="GO" id="GO:0045766">
    <property type="term" value="P:positive regulation of angiogenesis"/>
    <property type="evidence" value="ECO:0007669"/>
    <property type="project" value="TreeGrafter"/>
</dbReference>
<dbReference type="GO" id="GO:0001938">
    <property type="term" value="P:positive regulation of endothelial cell proliferation"/>
    <property type="evidence" value="ECO:0007669"/>
    <property type="project" value="TreeGrafter"/>
</dbReference>
<dbReference type="GO" id="GO:0060754">
    <property type="term" value="P:positive regulation of mast cell chemotaxis"/>
    <property type="evidence" value="ECO:0007669"/>
    <property type="project" value="TreeGrafter"/>
</dbReference>
<dbReference type="GO" id="GO:0001666">
    <property type="term" value="P:response to hypoxia"/>
    <property type="evidence" value="ECO:0007669"/>
    <property type="project" value="TreeGrafter"/>
</dbReference>
<dbReference type="GO" id="GO:0002040">
    <property type="term" value="P:sprouting angiogenesis"/>
    <property type="evidence" value="ECO:0007669"/>
    <property type="project" value="TreeGrafter"/>
</dbReference>
<dbReference type="GO" id="GO:0048010">
    <property type="term" value="P:vascular endothelial growth factor receptor signaling pathway"/>
    <property type="evidence" value="ECO:0007669"/>
    <property type="project" value="TreeGrafter"/>
</dbReference>
<dbReference type="GO" id="GO:0038084">
    <property type="term" value="P:vascular endothelial growth factor signaling pathway"/>
    <property type="evidence" value="ECO:0007669"/>
    <property type="project" value="TreeGrafter"/>
</dbReference>
<dbReference type="CDD" id="cd00135">
    <property type="entry name" value="PDGF"/>
    <property type="match status" value="1"/>
</dbReference>
<dbReference type="Gene3D" id="2.10.90.10">
    <property type="entry name" value="Cystine-knot cytokines"/>
    <property type="match status" value="1"/>
</dbReference>
<dbReference type="InterPro" id="IPR029034">
    <property type="entry name" value="Cystine-knot_cytokine"/>
</dbReference>
<dbReference type="InterPro" id="IPR023581">
    <property type="entry name" value="PD_growth_factor_CS"/>
</dbReference>
<dbReference type="InterPro" id="IPR000072">
    <property type="entry name" value="PDGF/VEGF_dom"/>
</dbReference>
<dbReference type="InterPro" id="IPR050507">
    <property type="entry name" value="PDGF/VEGF_growth_factor"/>
</dbReference>
<dbReference type="PANTHER" id="PTHR12025">
    <property type="entry name" value="VASCULAR ENDOTHELIAL GROWTH FACTOR"/>
    <property type="match status" value="1"/>
</dbReference>
<dbReference type="PANTHER" id="PTHR12025:SF5">
    <property type="entry name" value="VASCULAR ENDOTHELIAL GROWTH FACTOR A, LONG FORM"/>
    <property type="match status" value="1"/>
</dbReference>
<dbReference type="Pfam" id="PF00341">
    <property type="entry name" value="PDGF"/>
    <property type="match status" value="1"/>
</dbReference>
<dbReference type="SMART" id="SM00141">
    <property type="entry name" value="PDGF"/>
    <property type="match status" value="1"/>
</dbReference>
<dbReference type="SUPFAM" id="SSF57501">
    <property type="entry name" value="Cystine-knot cytokines"/>
    <property type="match status" value="1"/>
</dbReference>
<dbReference type="PROSITE" id="PS00249">
    <property type="entry name" value="PDGF_1"/>
    <property type="match status" value="1"/>
</dbReference>
<dbReference type="PROSITE" id="PS50278">
    <property type="entry name" value="PDGF_2"/>
    <property type="match status" value="1"/>
</dbReference>
<name>TXVE_BOTJA</name>